<name>DAPF_PELUB</name>
<comment type="function">
    <text evidence="1">Catalyzes the stereoinversion of LL-2,6-diaminopimelate (L,L-DAP) to meso-diaminopimelate (meso-DAP), a precursor of L-lysine and an essential component of the bacterial peptidoglycan.</text>
</comment>
<comment type="catalytic activity">
    <reaction evidence="1">
        <text>(2S,6S)-2,6-diaminopimelate = meso-2,6-diaminopimelate</text>
        <dbReference type="Rhea" id="RHEA:15393"/>
        <dbReference type="ChEBI" id="CHEBI:57609"/>
        <dbReference type="ChEBI" id="CHEBI:57791"/>
        <dbReference type="EC" id="5.1.1.7"/>
    </reaction>
</comment>
<comment type="pathway">
    <text evidence="1">Amino-acid biosynthesis; L-lysine biosynthesis via DAP pathway; DL-2,6-diaminopimelate from LL-2,6-diaminopimelate: step 1/1.</text>
</comment>
<comment type="subunit">
    <text evidence="1">Homodimer.</text>
</comment>
<comment type="subcellular location">
    <subcellularLocation>
        <location evidence="1">Cytoplasm</location>
    </subcellularLocation>
</comment>
<comment type="similarity">
    <text evidence="1">Belongs to the diaminopimelate epimerase family.</text>
</comment>
<reference key="1">
    <citation type="journal article" date="2005" name="Science">
        <title>Genome streamlining in a cosmopolitan oceanic bacterium.</title>
        <authorList>
            <person name="Giovannoni S.J."/>
            <person name="Tripp H.J."/>
            <person name="Givan S."/>
            <person name="Podar M."/>
            <person name="Vergin K.L."/>
            <person name="Baptista D."/>
            <person name="Bibbs L."/>
            <person name="Eads J."/>
            <person name="Richardson T.H."/>
            <person name="Noordewier M."/>
            <person name="Rappe M.S."/>
            <person name="Short J.M."/>
            <person name="Carrington J.C."/>
            <person name="Mathur E.J."/>
        </authorList>
    </citation>
    <scope>NUCLEOTIDE SEQUENCE [LARGE SCALE GENOMIC DNA]</scope>
    <source>
        <strain>HTCC1062</strain>
    </source>
</reference>
<protein>
    <recommendedName>
        <fullName evidence="1">Diaminopimelate epimerase</fullName>
        <shortName evidence="1">DAP epimerase</shortName>
        <ecNumber evidence="1">5.1.1.7</ecNumber>
    </recommendedName>
    <alternativeName>
        <fullName evidence="1">PLP-independent amino acid racemase</fullName>
    </alternativeName>
</protein>
<keyword id="KW-0028">Amino-acid biosynthesis</keyword>
<keyword id="KW-0963">Cytoplasm</keyword>
<keyword id="KW-0413">Isomerase</keyword>
<keyword id="KW-0457">Lysine biosynthesis</keyword>
<keyword id="KW-1185">Reference proteome</keyword>
<organism>
    <name type="scientific">Pelagibacter ubique (strain HTCC1062)</name>
    <dbReference type="NCBI Taxonomy" id="335992"/>
    <lineage>
        <taxon>Bacteria</taxon>
        <taxon>Pseudomonadati</taxon>
        <taxon>Pseudomonadota</taxon>
        <taxon>Alphaproteobacteria</taxon>
        <taxon>Candidatus Pelagibacterales</taxon>
        <taxon>Candidatus Pelagibacteraceae</taxon>
        <taxon>Candidatus Pelagibacter</taxon>
    </lineage>
</organism>
<sequence length="274" mass="30102">MDIKAFKMDGLGNDFVIIDQRSQDFNLDKDQIIKICDRSFIGCDQLILIKKNKEIDANVEFFNSDGSISGACGNGTRCVADLLSKESGKKEITLLTTSGSLKSKILGNNLVETEIGIPKVNWQEIPLSKQLDTQDLKIEIIDRNNTKHIGGIAINVGNPHIIFFVDDIEAFDLKNIGPKIENHPLFPEKCNVTLAKVINRNLIKVKVWERGAGLTKACGTAACATAVAANINNLVEKTTDIEFVLGSLTISIDERNSIHMKGPVSDIKNINIKL</sequence>
<accession>Q4FP10</accession>
<evidence type="ECO:0000255" key="1">
    <source>
        <dbReference type="HAMAP-Rule" id="MF_00197"/>
    </source>
</evidence>
<feature type="chain" id="PRO_1000011923" description="Diaminopimelate epimerase">
    <location>
        <begin position="1"/>
        <end position="274"/>
    </location>
</feature>
<feature type="active site" description="Proton donor" evidence="1">
    <location>
        <position position="72"/>
    </location>
</feature>
<feature type="active site" description="Proton acceptor" evidence="1">
    <location>
        <position position="218"/>
    </location>
</feature>
<feature type="binding site" evidence="1">
    <location>
        <position position="13"/>
    </location>
    <ligand>
        <name>substrate</name>
    </ligand>
</feature>
<feature type="binding site" evidence="1">
    <location>
        <position position="45"/>
    </location>
    <ligand>
        <name>substrate</name>
    </ligand>
</feature>
<feature type="binding site" evidence="1">
    <location>
        <position position="63"/>
    </location>
    <ligand>
        <name>substrate</name>
    </ligand>
</feature>
<feature type="binding site" evidence="1">
    <location>
        <begin position="73"/>
        <end position="74"/>
    </location>
    <ligand>
        <name>substrate</name>
    </ligand>
</feature>
<feature type="binding site" evidence="1">
    <location>
        <position position="158"/>
    </location>
    <ligand>
        <name>substrate</name>
    </ligand>
</feature>
<feature type="binding site" evidence="1">
    <location>
        <position position="191"/>
    </location>
    <ligand>
        <name>substrate</name>
    </ligand>
</feature>
<feature type="binding site" evidence="1">
    <location>
        <begin position="209"/>
        <end position="210"/>
    </location>
    <ligand>
        <name>substrate</name>
    </ligand>
</feature>
<feature type="binding site" evidence="1">
    <location>
        <begin position="219"/>
        <end position="220"/>
    </location>
    <ligand>
        <name>substrate</name>
    </ligand>
</feature>
<feature type="site" description="Could be important to modulate the pK values of the two catalytic cysteine residues" evidence="1">
    <location>
        <position position="160"/>
    </location>
</feature>
<feature type="site" description="Could be important to modulate the pK values of the two catalytic cysteine residues" evidence="1">
    <location>
        <position position="209"/>
    </location>
</feature>
<dbReference type="EC" id="5.1.1.7" evidence="1"/>
<dbReference type="EMBL" id="CP000084">
    <property type="protein sequence ID" value="AAZ21079.1"/>
    <property type="molecule type" value="Genomic_DNA"/>
</dbReference>
<dbReference type="RefSeq" id="WP_011281577.1">
    <property type="nucleotide sequence ID" value="NC_007205.1"/>
</dbReference>
<dbReference type="SMR" id="Q4FP10"/>
<dbReference type="STRING" id="335992.SAR11_0257"/>
<dbReference type="GeneID" id="66294755"/>
<dbReference type="KEGG" id="pub:SAR11_0257"/>
<dbReference type="eggNOG" id="COG0253">
    <property type="taxonomic scope" value="Bacteria"/>
</dbReference>
<dbReference type="HOGENOM" id="CLU_053306_1_0_5"/>
<dbReference type="OrthoDB" id="9805408at2"/>
<dbReference type="UniPathway" id="UPA00034">
    <property type="reaction ID" value="UER00025"/>
</dbReference>
<dbReference type="Proteomes" id="UP000002528">
    <property type="component" value="Chromosome"/>
</dbReference>
<dbReference type="GO" id="GO:0005829">
    <property type="term" value="C:cytosol"/>
    <property type="evidence" value="ECO:0007669"/>
    <property type="project" value="TreeGrafter"/>
</dbReference>
<dbReference type="GO" id="GO:0008837">
    <property type="term" value="F:diaminopimelate epimerase activity"/>
    <property type="evidence" value="ECO:0007669"/>
    <property type="project" value="UniProtKB-UniRule"/>
</dbReference>
<dbReference type="GO" id="GO:0009089">
    <property type="term" value="P:lysine biosynthetic process via diaminopimelate"/>
    <property type="evidence" value="ECO:0007669"/>
    <property type="project" value="UniProtKB-UniRule"/>
</dbReference>
<dbReference type="Gene3D" id="3.10.310.10">
    <property type="entry name" value="Diaminopimelate Epimerase, Chain A, domain 1"/>
    <property type="match status" value="2"/>
</dbReference>
<dbReference type="HAMAP" id="MF_00197">
    <property type="entry name" value="DAP_epimerase"/>
    <property type="match status" value="1"/>
</dbReference>
<dbReference type="InterPro" id="IPR018510">
    <property type="entry name" value="DAP_epimerase_AS"/>
</dbReference>
<dbReference type="InterPro" id="IPR001653">
    <property type="entry name" value="DAP_epimerase_DapF"/>
</dbReference>
<dbReference type="NCBIfam" id="TIGR00652">
    <property type="entry name" value="DapF"/>
    <property type="match status" value="1"/>
</dbReference>
<dbReference type="PANTHER" id="PTHR31689:SF0">
    <property type="entry name" value="DIAMINOPIMELATE EPIMERASE"/>
    <property type="match status" value="1"/>
</dbReference>
<dbReference type="PANTHER" id="PTHR31689">
    <property type="entry name" value="DIAMINOPIMELATE EPIMERASE, CHLOROPLASTIC"/>
    <property type="match status" value="1"/>
</dbReference>
<dbReference type="Pfam" id="PF01678">
    <property type="entry name" value="DAP_epimerase"/>
    <property type="match status" value="2"/>
</dbReference>
<dbReference type="SUPFAM" id="SSF54506">
    <property type="entry name" value="Diaminopimelate epimerase-like"/>
    <property type="match status" value="2"/>
</dbReference>
<dbReference type="PROSITE" id="PS01326">
    <property type="entry name" value="DAP_EPIMERASE"/>
    <property type="match status" value="1"/>
</dbReference>
<proteinExistence type="inferred from homology"/>
<gene>
    <name evidence="1" type="primary">dapF</name>
    <name type="ordered locus">SAR11_0257</name>
</gene>